<gene>
    <name evidence="1" type="primary">cinA</name>
    <name type="ordered locus">PEPE_1277</name>
</gene>
<protein>
    <recommendedName>
        <fullName evidence="1">Putative competence-damage inducible protein</fullName>
    </recommendedName>
</protein>
<evidence type="ECO:0000255" key="1">
    <source>
        <dbReference type="HAMAP-Rule" id="MF_00226"/>
    </source>
</evidence>
<proteinExistence type="inferred from homology"/>
<name>CINA_PEDPA</name>
<organism>
    <name type="scientific">Pediococcus pentosaceus (strain ATCC 25745 / CCUG 21536 / LMG 10740 / 183-1w)</name>
    <dbReference type="NCBI Taxonomy" id="278197"/>
    <lineage>
        <taxon>Bacteria</taxon>
        <taxon>Bacillati</taxon>
        <taxon>Bacillota</taxon>
        <taxon>Bacilli</taxon>
        <taxon>Lactobacillales</taxon>
        <taxon>Lactobacillaceae</taxon>
        <taxon>Pediococcus</taxon>
    </lineage>
</organism>
<dbReference type="EMBL" id="CP000422">
    <property type="protein sequence ID" value="ABJ68318.1"/>
    <property type="molecule type" value="Genomic_DNA"/>
</dbReference>
<dbReference type="RefSeq" id="WP_011673586.1">
    <property type="nucleotide sequence ID" value="NC_008525.1"/>
</dbReference>
<dbReference type="SMR" id="Q03EQ4"/>
<dbReference type="STRING" id="278197.PEPE_1277"/>
<dbReference type="GeneID" id="33061690"/>
<dbReference type="KEGG" id="ppe:PEPE_1277"/>
<dbReference type="eggNOG" id="COG1058">
    <property type="taxonomic scope" value="Bacteria"/>
</dbReference>
<dbReference type="eggNOG" id="COG1546">
    <property type="taxonomic scope" value="Bacteria"/>
</dbReference>
<dbReference type="HOGENOM" id="CLU_030805_9_3_9"/>
<dbReference type="OrthoDB" id="9801454at2"/>
<dbReference type="Proteomes" id="UP000000773">
    <property type="component" value="Chromosome"/>
</dbReference>
<dbReference type="CDD" id="cd00885">
    <property type="entry name" value="cinA"/>
    <property type="match status" value="1"/>
</dbReference>
<dbReference type="Gene3D" id="3.30.70.2860">
    <property type="match status" value="1"/>
</dbReference>
<dbReference type="Gene3D" id="3.90.950.20">
    <property type="entry name" value="CinA-like"/>
    <property type="match status" value="1"/>
</dbReference>
<dbReference type="Gene3D" id="3.40.980.10">
    <property type="entry name" value="MoaB/Mog-like domain"/>
    <property type="match status" value="1"/>
</dbReference>
<dbReference type="HAMAP" id="MF_00226_B">
    <property type="entry name" value="CinA_B"/>
    <property type="match status" value="1"/>
</dbReference>
<dbReference type="InterPro" id="IPR050101">
    <property type="entry name" value="CinA"/>
</dbReference>
<dbReference type="InterPro" id="IPR036653">
    <property type="entry name" value="CinA-like_C"/>
</dbReference>
<dbReference type="InterPro" id="IPR008136">
    <property type="entry name" value="CinA_C"/>
</dbReference>
<dbReference type="InterPro" id="IPR041424">
    <property type="entry name" value="CinA_KH"/>
</dbReference>
<dbReference type="InterPro" id="IPR008135">
    <property type="entry name" value="Competence-induced_CinA"/>
</dbReference>
<dbReference type="InterPro" id="IPR036425">
    <property type="entry name" value="MoaB/Mog-like_dom_sf"/>
</dbReference>
<dbReference type="InterPro" id="IPR001453">
    <property type="entry name" value="MoaB/Mog_dom"/>
</dbReference>
<dbReference type="NCBIfam" id="TIGR00200">
    <property type="entry name" value="cinA_nterm"/>
    <property type="match status" value="1"/>
</dbReference>
<dbReference type="NCBIfam" id="TIGR00177">
    <property type="entry name" value="molyb_syn"/>
    <property type="match status" value="1"/>
</dbReference>
<dbReference type="NCBIfam" id="TIGR00199">
    <property type="entry name" value="PncC_domain"/>
    <property type="match status" value="1"/>
</dbReference>
<dbReference type="NCBIfam" id="NF001813">
    <property type="entry name" value="PRK00549.1"/>
    <property type="match status" value="1"/>
</dbReference>
<dbReference type="PANTHER" id="PTHR13939">
    <property type="entry name" value="NICOTINAMIDE-NUCLEOTIDE AMIDOHYDROLASE PNCC"/>
    <property type="match status" value="1"/>
</dbReference>
<dbReference type="PANTHER" id="PTHR13939:SF0">
    <property type="entry name" value="NMN AMIDOHYDROLASE-LIKE PROTEIN YFAY"/>
    <property type="match status" value="1"/>
</dbReference>
<dbReference type="Pfam" id="PF02464">
    <property type="entry name" value="CinA"/>
    <property type="match status" value="1"/>
</dbReference>
<dbReference type="Pfam" id="PF18146">
    <property type="entry name" value="CinA_KH"/>
    <property type="match status" value="1"/>
</dbReference>
<dbReference type="Pfam" id="PF00994">
    <property type="entry name" value="MoCF_biosynth"/>
    <property type="match status" value="1"/>
</dbReference>
<dbReference type="PIRSF" id="PIRSF006728">
    <property type="entry name" value="CinA"/>
    <property type="match status" value="1"/>
</dbReference>
<dbReference type="SMART" id="SM00852">
    <property type="entry name" value="MoCF_biosynth"/>
    <property type="match status" value="1"/>
</dbReference>
<dbReference type="SUPFAM" id="SSF142433">
    <property type="entry name" value="CinA-like"/>
    <property type="match status" value="1"/>
</dbReference>
<dbReference type="SUPFAM" id="SSF53218">
    <property type="entry name" value="Molybdenum cofactor biosynthesis proteins"/>
    <property type="match status" value="1"/>
</dbReference>
<feature type="chain" id="PRO_0000336513" description="Putative competence-damage inducible protein">
    <location>
        <begin position="1"/>
        <end position="413"/>
    </location>
</feature>
<reference key="1">
    <citation type="journal article" date="2006" name="Proc. Natl. Acad. Sci. U.S.A.">
        <title>Comparative genomics of the lactic acid bacteria.</title>
        <authorList>
            <person name="Makarova K.S."/>
            <person name="Slesarev A."/>
            <person name="Wolf Y.I."/>
            <person name="Sorokin A."/>
            <person name="Mirkin B."/>
            <person name="Koonin E.V."/>
            <person name="Pavlov A."/>
            <person name="Pavlova N."/>
            <person name="Karamychev V."/>
            <person name="Polouchine N."/>
            <person name="Shakhova V."/>
            <person name="Grigoriev I."/>
            <person name="Lou Y."/>
            <person name="Rohksar D."/>
            <person name="Lucas S."/>
            <person name="Huang K."/>
            <person name="Goodstein D.M."/>
            <person name="Hawkins T."/>
            <person name="Plengvidhya V."/>
            <person name="Welker D."/>
            <person name="Hughes J."/>
            <person name="Goh Y."/>
            <person name="Benson A."/>
            <person name="Baldwin K."/>
            <person name="Lee J.-H."/>
            <person name="Diaz-Muniz I."/>
            <person name="Dosti B."/>
            <person name="Smeianov V."/>
            <person name="Wechter W."/>
            <person name="Barabote R."/>
            <person name="Lorca G."/>
            <person name="Altermann E."/>
            <person name="Barrangou R."/>
            <person name="Ganesan B."/>
            <person name="Xie Y."/>
            <person name="Rawsthorne H."/>
            <person name="Tamir D."/>
            <person name="Parker C."/>
            <person name="Breidt F."/>
            <person name="Broadbent J.R."/>
            <person name="Hutkins R."/>
            <person name="O'Sullivan D."/>
            <person name="Steele J."/>
            <person name="Unlu G."/>
            <person name="Saier M.H. Jr."/>
            <person name="Klaenhammer T."/>
            <person name="Richardson P."/>
            <person name="Kozyavkin S."/>
            <person name="Weimer B.C."/>
            <person name="Mills D.A."/>
        </authorList>
    </citation>
    <scope>NUCLEOTIDE SEQUENCE [LARGE SCALE GENOMIC DNA]</scope>
    <source>
        <strain>ATCC 25745 / CCUG 21536 / LMG 10740 / 183-1w</strain>
    </source>
</reference>
<sequence>MNAEIISVGTEILLGEIVDTNAVYLSQLFAKLGIDVFNKITVGDNEKNIMDALEVASKRSDLVVTIGGLGPTEDDITKQSLAKFVGKNLKHHPEALQQITDYFKKQNRPLTKNNERQALLLDGAKPIHNPNGLALGIFYHTEQTDYIVLPGPPSEFEPMVDEKVLPLLSQQYGLEKTIQSKTLHFVGIGEADLAARVDEIVRNQSNPTIALYFKPTDVTIRLTAKANSKLAAEEILNHTKKQLLDRVGEFFYAEGDRVSFTDFVVNQLIKRNISLTAAESLTGGAFESTVVETSGAATIFPGGFVTYADEVKSKLIGVQPATIEENTVVSRQVAEEMARGAQKTLDTDIAVSFTGVAGPGALEHHQPGNVWIGLAKRDGSIVTKEFNFVGNREKIRHLAVMNGFRMIWENVIK</sequence>
<comment type="similarity">
    <text evidence="1">Belongs to the CinA family.</text>
</comment>
<accession>Q03EQ4</accession>